<proteinExistence type="inferred from homology"/>
<organism>
    <name type="scientific">Chlorobaculum tepidum (strain ATCC 49652 / DSM 12025 / NBRC 103806 / TLS)</name>
    <name type="common">Chlorobium tepidum</name>
    <dbReference type="NCBI Taxonomy" id="194439"/>
    <lineage>
        <taxon>Bacteria</taxon>
        <taxon>Pseudomonadati</taxon>
        <taxon>Chlorobiota</taxon>
        <taxon>Chlorobiia</taxon>
        <taxon>Chlorobiales</taxon>
        <taxon>Chlorobiaceae</taxon>
        <taxon>Chlorobaculum</taxon>
    </lineage>
</organism>
<name>RL27_CHLTE</name>
<feature type="chain" id="PRO_0000181070" description="Large ribosomal subunit protein bL27">
    <location>
        <begin position="1"/>
        <end position="84"/>
    </location>
</feature>
<feature type="region of interest" description="Disordered" evidence="2">
    <location>
        <begin position="1"/>
        <end position="20"/>
    </location>
</feature>
<reference key="1">
    <citation type="journal article" date="2002" name="Proc. Natl. Acad. Sci. U.S.A.">
        <title>The complete genome sequence of Chlorobium tepidum TLS, a photosynthetic, anaerobic, green-sulfur bacterium.</title>
        <authorList>
            <person name="Eisen J.A."/>
            <person name="Nelson K.E."/>
            <person name="Paulsen I.T."/>
            <person name="Heidelberg J.F."/>
            <person name="Wu M."/>
            <person name="Dodson R.J."/>
            <person name="DeBoy R.T."/>
            <person name="Gwinn M.L."/>
            <person name="Nelson W.C."/>
            <person name="Haft D.H."/>
            <person name="Hickey E.K."/>
            <person name="Peterson J.D."/>
            <person name="Durkin A.S."/>
            <person name="Kolonay J.F."/>
            <person name="Yang F."/>
            <person name="Holt I.E."/>
            <person name="Umayam L.A."/>
            <person name="Mason T.M."/>
            <person name="Brenner M."/>
            <person name="Shea T.P."/>
            <person name="Parksey D.S."/>
            <person name="Nierman W.C."/>
            <person name="Feldblyum T.V."/>
            <person name="Hansen C.L."/>
            <person name="Craven M.B."/>
            <person name="Radune D."/>
            <person name="Vamathevan J.J."/>
            <person name="Khouri H.M."/>
            <person name="White O."/>
            <person name="Gruber T.M."/>
            <person name="Ketchum K.A."/>
            <person name="Venter J.C."/>
            <person name="Tettelin H."/>
            <person name="Bryant D.A."/>
            <person name="Fraser C.M."/>
        </authorList>
    </citation>
    <scope>NUCLEOTIDE SEQUENCE [LARGE SCALE GENOMIC DNA]</scope>
    <source>
        <strain>ATCC 49652 / DSM 12025 / NBRC 103806 / TLS</strain>
    </source>
</reference>
<dbReference type="EMBL" id="AE006470">
    <property type="protein sequence ID" value="AAM72733.1"/>
    <property type="molecule type" value="Genomic_DNA"/>
</dbReference>
<dbReference type="RefSeq" id="NP_662391.1">
    <property type="nucleotide sequence ID" value="NC_002932.3"/>
</dbReference>
<dbReference type="RefSeq" id="WP_010933172.1">
    <property type="nucleotide sequence ID" value="NC_002932.3"/>
</dbReference>
<dbReference type="SMR" id="Q8KCB7"/>
<dbReference type="STRING" id="194439.CT1506"/>
<dbReference type="EnsemblBacteria" id="AAM72733">
    <property type="protein sequence ID" value="AAM72733"/>
    <property type="gene ID" value="CT1506"/>
</dbReference>
<dbReference type="KEGG" id="cte:CT1506"/>
<dbReference type="PATRIC" id="fig|194439.7.peg.1366"/>
<dbReference type="eggNOG" id="COG0211">
    <property type="taxonomic scope" value="Bacteria"/>
</dbReference>
<dbReference type="HOGENOM" id="CLU_095424_4_0_10"/>
<dbReference type="OrthoDB" id="9803474at2"/>
<dbReference type="Proteomes" id="UP000001007">
    <property type="component" value="Chromosome"/>
</dbReference>
<dbReference type="GO" id="GO:1990904">
    <property type="term" value="C:ribonucleoprotein complex"/>
    <property type="evidence" value="ECO:0007669"/>
    <property type="project" value="UniProtKB-KW"/>
</dbReference>
<dbReference type="GO" id="GO:0005840">
    <property type="term" value="C:ribosome"/>
    <property type="evidence" value="ECO:0007669"/>
    <property type="project" value="UniProtKB-KW"/>
</dbReference>
<dbReference type="GO" id="GO:0003735">
    <property type="term" value="F:structural constituent of ribosome"/>
    <property type="evidence" value="ECO:0007669"/>
    <property type="project" value="InterPro"/>
</dbReference>
<dbReference type="GO" id="GO:0006412">
    <property type="term" value="P:translation"/>
    <property type="evidence" value="ECO:0007669"/>
    <property type="project" value="UniProtKB-UniRule"/>
</dbReference>
<dbReference type="FunFam" id="2.40.50.100:FF:000060">
    <property type="entry name" value="Apicoplast ribosomal protein L27"/>
    <property type="match status" value="1"/>
</dbReference>
<dbReference type="Gene3D" id="2.40.50.100">
    <property type="match status" value="1"/>
</dbReference>
<dbReference type="HAMAP" id="MF_00539">
    <property type="entry name" value="Ribosomal_bL27"/>
    <property type="match status" value="1"/>
</dbReference>
<dbReference type="InterPro" id="IPR001684">
    <property type="entry name" value="Ribosomal_bL27"/>
</dbReference>
<dbReference type="InterPro" id="IPR018261">
    <property type="entry name" value="Ribosomal_bL27_CS"/>
</dbReference>
<dbReference type="NCBIfam" id="TIGR00062">
    <property type="entry name" value="L27"/>
    <property type="match status" value="1"/>
</dbReference>
<dbReference type="PANTHER" id="PTHR15893:SF0">
    <property type="entry name" value="LARGE RIBOSOMAL SUBUNIT PROTEIN BL27M"/>
    <property type="match status" value="1"/>
</dbReference>
<dbReference type="PANTHER" id="PTHR15893">
    <property type="entry name" value="RIBOSOMAL PROTEIN L27"/>
    <property type="match status" value="1"/>
</dbReference>
<dbReference type="Pfam" id="PF01016">
    <property type="entry name" value="Ribosomal_L27"/>
    <property type="match status" value="1"/>
</dbReference>
<dbReference type="PRINTS" id="PR00063">
    <property type="entry name" value="RIBOSOMALL27"/>
</dbReference>
<dbReference type="SUPFAM" id="SSF110324">
    <property type="entry name" value="Ribosomal L27 protein-like"/>
    <property type="match status" value="1"/>
</dbReference>
<dbReference type="PROSITE" id="PS00831">
    <property type="entry name" value="RIBOSOMAL_L27"/>
    <property type="match status" value="1"/>
</dbReference>
<gene>
    <name evidence="1" type="primary">rpmA</name>
    <name type="ordered locus">CT1506</name>
</gene>
<protein>
    <recommendedName>
        <fullName evidence="1">Large ribosomal subunit protein bL27</fullName>
    </recommendedName>
    <alternativeName>
        <fullName evidence="3">50S ribosomal protein L27</fullName>
    </alternativeName>
</protein>
<keyword id="KW-1185">Reference proteome</keyword>
<keyword id="KW-0687">Ribonucleoprotein</keyword>
<keyword id="KW-0689">Ribosomal protein</keyword>
<accession>Q8KCB7</accession>
<evidence type="ECO:0000255" key="1">
    <source>
        <dbReference type="HAMAP-Rule" id="MF_00539"/>
    </source>
</evidence>
<evidence type="ECO:0000256" key="2">
    <source>
        <dbReference type="SAM" id="MobiDB-lite"/>
    </source>
</evidence>
<evidence type="ECO:0000305" key="3"/>
<comment type="similarity">
    <text evidence="1">Belongs to the bacterial ribosomal protein bL27 family.</text>
</comment>
<sequence length="84" mass="8806">MAHKKGGGSTKNGRDSNPKYLGVKAAGGSVVNAGTIILRQRGTAIKPGNNAGLGRDHTIFALVDGTVHFRNGRNNKKRVDIIPS</sequence>